<dbReference type="EMBL" id="CP000745">
    <property type="protein sequence ID" value="ABR66053.1"/>
    <property type="molecule type" value="Genomic_DNA"/>
</dbReference>
<dbReference type="SMR" id="A6VHX7"/>
<dbReference type="STRING" id="426368.MmarC7_0986"/>
<dbReference type="KEGG" id="mmz:MmarC7_0986"/>
<dbReference type="eggNOG" id="arCOG00488">
    <property type="taxonomic scope" value="Archaea"/>
</dbReference>
<dbReference type="HOGENOM" id="CLU_043978_1_0_2"/>
<dbReference type="OrthoDB" id="14749at2157"/>
<dbReference type="GO" id="GO:0003677">
    <property type="term" value="F:DNA binding"/>
    <property type="evidence" value="ECO:0007669"/>
    <property type="project" value="UniProtKB-UniRule"/>
</dbReference>
<dbReference type="GO" id="GO:0030337">
    <property type="term" value="F:DNA polymerase processivity factor activity"/>
    <property type="evidence" value="ECO:0007669"/>
    <property type="project" value="UniProtKB-UniRule"/>
</dbReference>
<dbReference type="GO" id="GO:0006272">
    <property type="term" value="P:leading strand elongation"/>
    <property type="evidence" value="ECO:0007669"/>
    <property type="project" value="TreeGrafter"/>
</dbReference>
<dbReference type="GO" id="GO:0006275">
    <property type="term" value="P:regulation of DNA replication"/>
    <property type="evidence" value="ECO:0007669"/>
    <property type="project" value="UniProtKB-UniRule"/>
</dbReference>
<dbReference type="CDD" id="cd00577">
    <property type="entry name" value="PCNA"/>
    <property type="match status" value="1"/>
</dbReference>
<dbReference type="Gene3D" id="3.70.10.10">
    <property type="match status" value="1"/>
</dbReference>
<dbReference type="HAMAP" id="MF_00317">
    <property type="entry name" value="DNApol_clamp_arch"/>
    <property type="match status" value="1"/>
</dbReference>
<dbReference type="InterPro" id="IPR046938">
    <property type="entry name" value="DNA_clamp_sf"/>
</dbReference>
<dbReference type="InterPro" id="IPR000730">
    <property type="entry name" value="Pr_cel_nuc_antig"/>
</dbReference>
<dbReference type="InterPro" id="IPR022649">
    <property type="entry name" value="Pr_cel_nuc_antig_C"/>
</dbReference>
<dbReference type="InterPro" id="IPR022659">
    <property type="entry name" value="Pr_cel_nuc_antig_CS"/>
</dbReference>
<dbReference type="InterPro" id="IPR022648">
    <property type="entry name" value="Pr_cel_nuc_antig_N"/>
</dbReference>
<dbReference type="NCBIfam" id="TIGR00590">
    <property type="entry name" value="pcna"/>
    <property type="match status" value="1"/>
</dbReference>
<dbReference type="NCBIfam" id="NF002219">
    <property type="entry name" value="PRK01115.1-2"/>
    <property type="match status" value="1"/>
</dbReference>
<dbReference type="PANTHER" id="PTHR11352">
    <property type="entry name" value="PROLIFERATING CELL NUCLEAR ANTIGEN"/>
    <property type="match status" value="1"/>
</dbReference>
<dbReference type="PANTHER" id="PTHR11352:SF0">
    <property type="entry name" value="PROLIFERATING CELL NUCLEAR ANTIGEN"/>
    <property type="match status" value="1"/>
</dbReference>
<dbReference type="Pfam" id="PF02747">
    <property type="entry name" value="PCNA_C"/>
    <property type="match status" value="1"/>
</dbReference>
<dbReference type="Pfam" id="PF00705">
    <property type="entry name" value="PCNA_N"/>
    <property type="match status" value="1"/>
</dbReference>
<dbReference type="PRINTS" id="PR00339">
    <property type="entry name" value="PCNACYCLIN"/>
</dbReference>
<dbReference type="SUPFAM" id="SSF55979">
    <property type="entry name" value="DNA clamp"/>
    <property type="match status" value="2"/>
</dbReference>
<dbReference type="PROSITE" id="PS01251">
    <property type="entry name" value="PCNA_1"/>
    <property type="match status" value="1"/>
</dbReference>
<sequence>MFRATCNTRDFKKVINATSNLVDEICFEVDENGIKASAMDPSHVALVSMEMPKDVFEEYEGDIQDIGIDLEALKKIIARGRGDEKLILDLDTEKNKLNVTFKSNVTRKFSIALYDVSSSNLKVPDIEYPNSVSIKAGAFVEALKDAELVNDHITLKIDEDKFIIYSKGDLNQSETVFDNSIEDDDNALAEFNMGEASRSTFNLAYLKDLTKSTAAEDLLKIYLGSDMPVKIEYEVSGSKLVFLLAPRIES</sequence>
<protein>
    <recommendedName>
        <fullName evidence="1">DNA polymerase sliding clamp</fullName>
    </recommendedName>
    <alternativeName>
        <fullName evidence="1">Proliferating cell nuclear antigen homolog</fullName>
        <shortName evidence="1">PCNA</shortName>
    </alternativeName>
</protein>
<comment type="function">
    <text evidence="1">Sliding clamp subunit that acts as a moving platform for DNA processing. Responsible for tethering the catalytic subunit of DNA polymerase and other proteins to DNA during high-speed replication.</text>
</comment>
<comment type="subunit">
    <text evidence="1">Homotrimer. The subunits circularize to form a toroid; DNA passes through its center. Replication factor C (RFC) is required to load the toroid on the DNA.</text>
</comment>
<comment type="similarity">
    <text evidence="1">Belongs to the PCNA family.</text>
</comment>
<keyword id="KW-0235">DNA replication</keyword>
<keyword id="KW-0238">DNA-binding</keyword>
<gene>
    <name evidence="1" type="primary">pcn</name>
    <name type="ordered locus">MmarC7_0986</name>
</gene>
<accession>A6VHX7</accession>
<feature type="chain" id="PRO_1000019173" description="DNA polymerase sliding clamp">
    <location>
        <begin position="1"/>
        <end position="250"/>
    </location>
</feature>
<organism>
    <name type="scientific">Methanococcus maripaludis (strain C7 / ATCC BAA-1331)</name>
    <dbReference type="NCBI Taxonomy" id="426368"/>
    <lineage>
        <taxon>Archaea</taxon>
        <taxon>Methanobacteriati</taxon>
        <taxon>Methanobacteriota</taxon>
        <taxon>Methanomada group</taxon>
        <taxon>Methanococci</taxon>
        <taxon>Methanococcales</taxon>
        <taxon>Methanococcaceae</taxon>
        <taxon>Methanococcus</taxon>
    </lineage>
</organism>
<name>PCNA_METM7</name>
<evidence type="ECO:0000255" key="1">
    <source>
        <dbReference type="HAMAP-Rule" id="MF_00317"/>
    </source>
</evidence>
<proteinExistence type="inferred from homology"/>
<reference key="1">
    <citation type="submission" date="2007-06" db="EMBL/GenBank/DDBJ databases">
        <title>Complete sequence of Methanococcus maripaludis C7.</title>
        <authorList>
            <consortium name="US DOE Joint Genome Institute"/>
            <person name="Copeland A."/>
            <person name="Lucas S."/>
            <person name="Lapidus A."/>
            <person name="Barry K."/>
            <person name="Glavina del Rio T."/>
            <person name="Dalin E."/>
            <person name="Tice H."/>
            <person name="Pitluck S."/>
            <person name="Clum A."/>
            <person name="Schmutz J."/>
            <person name="Larimer F."/>
            <person name="Land M."/>
            <person name="Hauser L."/>
            <person name="Kyrpides N."/>
            <person name="Anderson I."/>
            <person name="Sieprawska-Lupa M."/>
            <person name="Whitman W.B."/>
            <person name="Richardson P."/>
        </authorList>
    </citation>
    <scope>NUCLEOTIDE SEQUENCE [LARGE SCALE GENOMIC DNA]</scope>
    <source>
        <strain>C7 / ATCC BAA-1331</strain>
    </source>
</reference>